<reference key="1">
    <citation type="journal article" date="1988" name="J. Bacteriol.">
        <title>Bacillus sporulation gene spo0H codes for sigma 30 (sigma H).</title>
        <authorList>
            <person name="Dubnau E."/>
            <person name="Weir J."/>
            <person name="Nair G."/>
            <person name="Carter L. III"/>
            <person name="Moran C.P. Jr."/>
            <person name="Smith I."/>
        </authorList>
    </citation>
    <scope>NUCLEOTIDE SEQUENCE [GENOMIC DNA]</scope>
</reference>
<reference key="2">
    <citation type="journal article" date="1997" name="Nature">
        <title>The complete genome sequence of the Gram-positive bacterium Bacillus subtilis.</title>
        <authorList>
            <person name="Kunst F."/>
            <person name="Ogasawara N."/>
            <person name="Moszer I."/>
            <person name="Albertini A.M."/>
            <person name="Alloni G."/>
            <person name="Azevedo V."/>
            <person name="Bertero M.G."/>
            <person name="Bessieres P."/>
            <person name="Bolotin A."/>
            <person name="Borchert S."/>
            <person name="Borriss R."/>
            <person name="Boursier L."/>
            <person name="Brans A."/>
            <person name="Braun M."/>
            <person name="Brignell S.C."/>
            <person name="Bron S."/>
            <person name="Brouillet S."/>
            <person name="Bruschi C.V."/>
            <person name="Caldwell B."/>
            <person name="Capuano V."/>
            <person name="Carter N.M."/>
            <person name="Choi S.-K."/>
            <person name="Codani J.-J."/>
            <person name="Connerton I.F."/>
            <person name="Cummings N.J."/>
            <person name="Daniel R.A."/>
            <person name="Denizot F."/>
            <person name="Devine K.M."/>
            <person name="Duesterhoeft A."/>
            <person name="Ehrlich S.D."/>
            <person name="Emmerson P.T."/>
            <person name="Entian K.-D."/>
            <person name="Errington J."/>
            <person name="Fabret C."/>
            <person name="Ferrari E."/>
            <person name="Foulger D."/>
            <person name="Fritz C."/>
            <person name="Fujita M."/>
            <person name="Fujita Y."/>
            <person name="Fuma S."/>
            <person name="Galizzi A."/>
            <person name="Galleron N."/>
            <person name="Ghim S.-Y."/>
            <person name="Glaser P."/>
            <person name="Goffeau A."/>
            <person name="Golightly E.J."/>
            <person name="Grandi G."/>
            <person name="Guiseppi G."/>
            <person name="Guy B.J."/>
            <person name="Haga K."/>
            <person name="Haiech J."/>
            <person name="Harwood C.R."/>
            <person name="Henaut A."/>
            <person name="Hilbert H."/>
            <person name="Holsappel S."/>
            <person name="Hosono S."/>
            <person name="Hullo M.-F."/>
            <person name="Itaya M."/>
            <person name="Jones L.-M."/>
            <person name="Joris B."/>
            <person name="Karamata D."/>
            <person name="Kasahara Y."/>
            <person name="Klaerr-Blanchard M."/>
            <person name="Klein C."/>
            <person name="Kobayashi Y."/>
            <person name="Koetter P."/>
            <person name="Koningstein G."/>
            <person name="Krogh S."/>
            <person name="Kumano M."/>
            <person name="Kurita K."/>
            <person name="Lapidus A."/>
            <person name="Lardinois S."/>
            <person name="Lauber J."/>
            <person name="Lazarevic V."/>
            <person name="Lee S.-M."/>
            <person name="Levine A."/>
            <person name="Liu H."/>
            <person name="Masuda S."/>
            <person name="Mauel C."/>
            <person name="Medigue C."/>
            <person name="Medina N."/>
            <person name="Mellado R.P."/>
            <person name="Mizuno M."/>
            <person name="Moestl D."/>
            <person name="Nakai S."/>
            <person name="Noback M."/>
            <person name="Noone D."/>
            <person name="O'Reilly M."/>
            <person name="Ogawa K."/>
            <person name="Ogiwara A."/>
            <person name="Oudega B."/>
            <person name="Park S.-H."/>
            <person name="Parro V."/>
            <person name="Pohl T.M."/>
            <person name="Portetelle D."/>
            <person name="Porwollik S."/>
            <person name="Prescott A.M."/>
            <person name="Presecan E."/>
            <person name="Pujic P."/>
            <person name="Purnelle B."/>
            <person name="Rapoport G."/>
            <person name="Rey M."/>
            <person name="Reynolds S."/>
            <person name="Rieger M."/>
            <person name="Rivolta C."/>
            <person name="Rocha E."/>
            <person name="Roche B."/>
            <person name="Rose M."/>
            <person name="Sadaie Y."/>
            <person name="Sato T."/>
            <person name="Scanlan E."/>
            <person name="Schleich S."/>
            <person name="Schroeter R."/>
            <person name="Scoffone F."/>
            <person name="Sekiguchi J."/>
            <person name="Sekowska A."/>
            <person name="Seror S.J."/>
            <person name="Serror P."/>
            <person name="Shin B.-S."/>
            <person name="Soldo B."/>
            <person name="Sorokin A."/>
            <person name="Tacconi E."/>
            <person name="Takagi T."/>
            <person name="Takahashi H."/>
            <person name="Takemaru K."/>
            <person name="Takeuchi M."/>
            <person name="Tamakoshi A."/>
            <person name="Tanaka T."/>
            <person name="Terpstra P."/>
            <person name="Tognoni A."/>
            <person name="Tosato V."/>
            <person name="Uchiyama S."/>
            <person name="Vandenbol M."/>
            <person name="Vannier F."/>
            <person name="Vassarotti A."/>
            <person name="Viari A."/>
            <person name="Wambutt R."/>
            <person name="Wedler E."/>
            <person name="Wedler H."/>
            <person name="Weitzenegger T."/>
            <person name="Winters P."/>
            <person name="Wipat A."/>
            <person name="Yamamoto H."/>
            <person name="Yamane K."/>
            <person name="Yasumoto K."/>
            <person name="Yata K."/>
            <person name="Yoshida K."/>
            <person name="Yoshikawa H.-F."/>
            <person name="Zumstein E."/>
            <person name="Yoshikawa H."/>
            <person name="Danchin A."/>
        </authorList>
    </citation>
    <scope>NUCLEOTIDE SEQUENCE [LARGE SCALE GENOMIC DNA]</scope>
    <source>
        <strain>168</strain>
    </source>
</reference>
<reference key="3">
    <citation type="journal article" date="1993" name="Mol. Microbiol.">
        <title>Isolation and characterization of the secE homologue gene of Bacillus subtilis.</title>
        <authorList>
            <person name="Jeong S."/>
            <person name="Yoshikawa H."/>
            <person name="Takahashi H."/>
        </authorList>
    </citation>
    <scope>NUCLEOTIDE SEQUENCE [GENOMIC DNA] OF 114-218</scope>
</reference>
<reference key="4">
    <citation type="journal article" date="1989" name="J. Mol. Biol.">
        <title>Mutation changing the specificity of an RNA polymerase sigma factor.</title>
        <authorList>
            <person name="Zuber P."/>
            <person name="Healy J."/>
            <person name="Carter H.L. III"/>
            <person name="Cutting S."/>
            <person name="Moran C.P. Jr."/>
            <person name="Losick R."/>
        </authorList>
    </citation>
    <scope>MUTAGENESIS OF THR-100</scope>
    <source>
        <strain>168 / JH642</strain>
    </source>
</reference>
<reference key="5">
    <citation type="journal article" date="1990" name="Proc. Natl. Acad. Sci. U.S.A.">
        <title>Two amino acids in an RNA polymerase sigma factor involved in the recognition of adjacent base pairs in the -10 region of a cognate promoter.</title>
        <authorList>
            <person name="Daniels D."/>
            <person name="Zuber P."/>
            <person name="Losick R."/>
        </authorList>
    </citation>
    <scope>MUTAGENESIS OF ARG-96 AND THR-100</scope>
    <source>
        <strain>168 / JH642</strain>
    </source>
</reference>
<reference key="6">
    <citation type="journal article" date="2011" name="Proteomics">
        <title>The dynamic protein partnership of RNA polymerase in Bacillus subtilis.</title>
        <authorList>
            <person name="Delumeau O."/>
            <person name="Lecointe F."/>
            <person name="Muntel J."/>
            <person name="Guillot A."/>
            <person name="Guedon E."/>
            <person name="Monnet V."/>
            <person name="Hecker M."/>
            <person name="Becher D."/>
            <person name="Polard P."/>
            <person name="Noirot P."/>
        </authorList>
    </citation>
    <scope>FUNCTION</scope>
    <scope>SUBUNIT</scope>
    <scope>INDUCTION BY SPORULATION</scope>
    <source>
        <strain>168</strain>
    </source>
</reference>
<comment type="function">
    <text evidence="3">Sigma factors are initiation factors that promote the attachment of RNA polymerase (RNAP) to specific initiation sites and are then released. This sigma factor is involved in the transition to post-exponential phase in the beginning of sporulation. It is also required for transcription of several stationary phase genes. Association with the RNAP core increases rapidly in early exponential phase, and reamins constant expression level after (PubMed:21710567).</text>
</comment>
<comment type="subunit">
    <text evidence="6">Interacts transiently with the RNAP core.</text>
</comment>
<comment type="induction">
    <text evidence="3">Association with RNAP core increases during sporulation but not tested stresses (at protein level).</text>
</comment>
<comment type="similarity">
    <text evidence="5">Belongs to the sigma-70 factor family.</text>
</comment>
<protein>
    <recommendedName>
        <fullName>RNA polymerase sigma-H factor</fullName>
    </recommendedName>
    <alternativeName>
        <fullName>Sigma-30</fullName>
    </alternativeName>
    <alternativeName>
        <fullName>Stage 0 sporulation protein H</fullName>
    </alternativeName>
</protein>
<organism>
    <name type="scientific">Bacillus subtilis (strain 168)</name>
    <dbReference type="NCBI Taxonomy" id="224308"/>
    <lineage>
        <taxon>Bacteria</taxon>
        <taxon>Bacillati</taxon>
        <taxon>Bacillota</taxon>
        <taxon>Bacilli</taxon>
        <taxon>Bacillales</taxon>
        <taxon>Bacillaceae</taxon>
        <taxon>Bacillus</taxon>
    </lineage>
</organism>
<proteinExistence type="evidence at protein level"/>
<dbReference type="EMBL" id="M29693">
    <property type="protein sequence ID" value="AAA22756.1"/>
    <property type="molecule type" value="Genomic_DNA"/>
</dbReference>
<dbReference type="EMBL" id="AL009126">
    <property type="protein sequence ID" value="CAB11874.1"/>
    <property type="molecule type" value="Genomic_DNA"/>
</dbReference>
<dbReference type="EMBL" id="D13303">
    <property type="protein sequence ID" value="BAA02557.1"/>
    <property type="molecule type" value="Genomic_DNA"/>
</dbReference>
<dbReference type="PIR" id="A28625">
    <property type="entry name" value="A28625"/>
</dbReference>
<dbReference type="RefSeq" id="NP_387979.1">
    <property type="nucleotide sequence ID" value="NC_000964.3"/>
</dbReference>
<dbReference type="RefSeq" id="WP_009966312.1">
    <property type="nucleotide sequence ID" value="NZ_OZ025638.1"/>
</dbReference>
<dbReference type="SMR" id="P17869"/>
<dbReference type="FunCoup" id="P17869">
    <property type="interactions" value="16"/>
</dbReference>
<dbReference type="STRING" id="224308.BSU00980"/>
<dbReference type="PaxDb" id="224308-BSU00980"/>
<dbReference type="DNASU" id="936150"/>
<dbReference type="EnsemblBacteria" id="CAB11874">
    <property type="protein sequence ID" value="CAB11874"/>
    <property type="gene ID" value="BSU_00980"/>
</dbReference>
<dbReference type="GeneID" id="936150"/>
<dbReference type="KEGG" id="bsu:BSU00980"/>
<dbReference type="PATRIC" id="fig|224308.179.peg.101"/>
<dbReference type="eggNOG" id="COG1595">
    <property type="taxonomic scope" value="Bacteria"/>
</dbReference>
<dbReference type="InParanoid" id="P17869"/>
<dbReference type="OrthoDB" id="9783788at2"/>
<dbReference type="PhylomeDB" id="P17869"/>
<dbReference type="BioCyc" id="BSUB:BSU00980-MONOMER"/>
<dbReference type="Proteomes" id="UP000001570">
    <property type="component" value="Chromosome"/>
</dbReference>
<dbReference type="GO" id="GO:0003677">
    <property type="term" value="F:DNA binding"/>
    <property type="evidence" value="ECO:0007669"/>
    <property type="project" value="UniProtKB-KW"/>
</dbReference>
<dbReference type="GO" id="GO:0016987">
    <property type="term" value="F:sigma factor activity"/>
    <property type="evidence" value="ECO:0000318"/>
    <property type="project" value="GO_Central"/>
</dbReference>
<dbReference type="GO" id="GO:0006352">
    <property type="term" value="P:DNA-templated transcription initiation"/>
    <property type="evidence" value="ECO:0007669"/>
    <property type="project" value="InterPro"/>
</dbReference>
<dbReference type="GO" id="GO:0006355">
    <property type="term" value="P:regulation of DNA-templated transcription"/>
    <property type="evidence" value="ECO:0000318"/>
    <property type="project" value="GO_Central"/>
</dbReference>
<dbReference type="GO" id="GO:0030435">
    <property type="term" value="P:sporulation resulting in formation of a cellular spore"/>
    <property type="evidence" value="ECO:0007669"/>
    <property type="project" value="UniProtKB-KW"/>
</dbReference>
<dbReference type="Gene3D" id="1.20.120.1810">
    <property type="match status" value="1"/>
</dbReference>
<dbReference type="Gene3D" id="1.10.10.10">
    <property type="entry name" value="Winged helix-like DNA-binding domain superfamily/Winged helix DNA-binding domain"/>
    <property type="match status" value="1"/>
</dbReference>
<dbReference type="InterPro" id="IPR014284">
    <property type="entry name" value="RNA_pol_sigma-70_dom"/>
</dbReference>
<dbReference type="InterPro" id="IPR014218">
    <property type="entry name" value="RNA_pol_sigma-H"/>
</dbReference>
<dbReference type="InterPro" id="IPR016371">
    <property type="entry name" value="RNA_pol_sigma-H_factor"/>
</dbReference>
<dbReference type="InterPro" id="IPR000943">
    <property type="entry name" value="RNA_pol_sigma70"/>
</dbReference>
<dbReference type="InterPro" id="IPR007627">
    <property type="entry name" value="RNA_pol_sigma70_r2"/>
</dbReference>
<dbReference type="InterPro" id="IPR013249">
    <property type="entry name" value="RNA_pol_sigma70_r4_t2"/>
</dbReference>
<dbReference type="InterPro" id="IPR013325">
    <property type="entry name" value="RNA_pol_sigma_r2"/>
</dbReference>
<dbReference type="InterPro" id="IPR013324">
    <property type="entry name" value="RNA_pol_sigma_r3/r4-like"/>
</dbReference>
<dbReference type="InterPro" id="IPR000792">
    <property type="entry name" value="Tscrpt_reg_LuxR_C"/>
</dbReference>
<dbReference type="InterPro" id="IPR036388">
    <property type="entry name" value="WH-like_DNA-bd_sf"/>
</dbReference>
<dbReference type="NCBIfam" id="NF006145">
    <property type="entry name" value="PRK08295.1-2"/>
    <property type="match status" value="1"/>
</dbReference>
<dbReference type="NCBIfam" id="NF006147">
    <property type="entry name" value="PRK08295.1-4"/>
    <property type="match status" value="1"/>
</dbReference>
<dbReference type="NCBIfam" id="NF006148">
    <property type="entry name" value="PRK08295.1-5"/>
    <property type="match status" value="1"/>
</dbReference>
<dbReference type="NCBIfam" id="TIGR02937">
    <property type="entry name" value="sigma70-ECF"/>
    <property type="match status" value="1"/>
</dbReference>
<dbReference type="NCBIfam" id="TIGR02859">
    <property type="entry name" value="spore_sigH"/>
    <property type="match status" value="1"/>
</dbReference>
<dbReference type="PANTHER" id="PTHR30385:SF1">
    <property type="entry name" value="RNA POLYMERASE SIGMA-H FACTOR"/>
    <property type="match status" value="1"/>
</dbReference>
<dbReference type="PANTHER" id="PTHR30385">
    <property type="entry name" value="SIGMA FACTOR F FLAGELLAR"/>
    <property type="match status" value="1"/>
</dbReference>
<dbReference type="Pfam" id="PF04542">
    <property type="entry name" value="Sigma70_r2"/>
    <property type="match status" value="1"/>
</dbReference>
<dbReference type="Pfam" id="PF08281">
    <property type="entry name" value="Sigma70_r4_2"/>
    <property type="match status" value="1"/>
</dbReference>
<dbReference type="PIRSF" id="PIRSF002939">
    <property type="entry name" value="RNA_polymerase_sigma-H_factor"/>
    <property type="match status" value="1"/>
</dbReference>
<dbReference type="SUPFAM" id="SSF88946">
    <property type="entry name" value="Sigma2 domain of RNA polymerase sigma factors"/>
    <property type="match status" value="1"/>
</dbReference>
<dbReference type="SUPFAM" id="SSF88659">
    <property type="entry name" value="Sigma3 and sigma4 domains of RNA polymerase sigma factors"/>
    <property type="match status" value="1"/>
</dbReference>
<dbReference type="PROSITE" id="PS00715">
    <property type="entry name" value="SIGMA70_1"/>
    <property type="match status" value="1"/>
</dbReference>
<evidence type="ECO:0000250" key="1"/>
<evidence type="ECO:0000269" key="2">
    <source>
    </source>
</evidence>
<evidence type="ECO:0000269" key="3">
    <source>
    </source>
</evidence>
<evidence type="ECO:0000269" key="4">
    <source>
    </source>
</evidence>
<evidence type="ECO:0000305" key="5"/>
<evidence type="ECO:0000305" key="6">
    <source>
    </source>
</evidence>
<sequence>MNLQNNKGKFNKEQFCQLEDEQVIEKVHVGDSDALDYLITKYRNFVRAKARSYFLIGADREDIVQEGMIGLYKSIRDFKEDKLTSFKAFAELCITRQIITAIKTATRQKHIPLNSYASLDKPIFDEESDRTLLDVISGAKTLNPEEMIINQEEFDDIEMKMGELLSDLERKVLVLYLDGRSYQEISDELNRHVKSIDNALQRVKRKLEKYLEIREISL</sequence>
<accession>P17869</accession>
<keyword id="KW-0238">DNA-binding</keyword>
<keyword id="KW-1185">Reference proteome</keyword>
<keyword id="KW-0731">Sigma factor</keyword>
<keyword id="KW-0749">Sporulation</keyword>
<keyword id="KW-0804">Transcription</keyword>
<keyword id="KW-0805">Transcription regulation</keyword>
<gene>
    <name type="primary">sigH</name>
    <name type="synonym">spo0H</name>
    <name type="ordered locus">BSU00980</name>
</gene>
<name>RPSH_BACSU</name>
<feature type="chain" id="PRO_0000093949" description="RNA polymerase sigma-H factor">
    <location>
        <begin position="1"/>
        <end position="218"/>
    </location>
</feature>
<feature type="DNA-binding region" description="H-T-H motif" evidence="1">
    <location>
        <begin position="182"/>
        <end position="201"/>
    </location>
</feature>
<feature type="short sequence motif" description="Polymerase core binding">
    <location>
        <begin position="62"/>
        <end position="75"/>
    </location>
</feature>
<feature type="mutagenesis site" description="Suppressor of mutations in the -12 region of the spoVG promoter." evidence="2">
    <original>R</original>
    <variation>A</variation>
    <location>
        <position position="96"/>
    </location>
</feature>
<feature type="mutagenesis site" description="Suppressor of mutations in the -13 region of the spoVG promoter." evidence="2 4">
    <original>T</original>
    <variation>A</variation>
    <location>
        <position position="100"/>
    </location>
</feature>
<feature type="mutagenesis site" description="Loss of ability to recognize wild-type spoVG promoter. Suppressor of the spoVG249 mutation in the -10 region of the spoVG promoter." evidence="2 4">
    <original>T</original>
    <variation>I</variation>
    <location>
        <position position="100"/>
    </location>
</feature>